<proteinExistence type="evidence at protein level"/>
<name>ACOX2_ARATH</name>
<comment type="function">
    <text evidence="3">Catalyzes the desaturation of long-chain acyl-CoAs to 2-trans-enoyl-CoAs. Active on substrates longer than C14 and mostly with C18-CoA. Activity on long-chain mono-unsaturated substrates is double than with the corresponding saturated substrates.</text>
</comment>
<comment type="catalytic activity">
    <reaction evidence="3">
        <text>a 2,3-saturated acyl-CoA + O2 = a (2E)-enoyl-CoA + H2O2</text>
        <dbReference type="Rhea" id="RHEA:38959"/>
        <dbReference type="ChEBI" id="CHEBI:15379"/>
        <dbReference type="ChEBI" id="CHEBI:16240"/>
        <dbReference type="ChEBI" id="CHEBI:58856"/>
        <dbReference type="ChEBI" id="CHEBI:65111"/>
        <dbReference type="EC" id="1.3.3.6"/>
    </reaction>
    <physiologicalReaction direction="left-to-right" evidence="3">
        <dbReference type="Rhea" id="RHEA:38960"/>
    </physiologicalReaction>
</comment>
<comment type="cofactor">
    <cofactor evidence="1">
        <name>FAD</name>
        <dbReference type="ChEBI" id="CHEBI:57692"/>
    </cofactor>
    <text evidence="1">Binds 1 FAD per subunit.</text>
</comment>
<comment type="biophysicochemical properties">
    <kinetics>
        <KM evidence="3">4.4 uM for C18:1-CoA</KM>
    </kinetics>
</comment>
<comment type="subunit">
    <text evidence="1">Homodimer.</text>
</comment>
<comment type="subcellular location">
    <subcellularLocation>
        <location evidence="2">Peroxisome</location>
    </subcellularLocation>
</comment>
<comment type="alternative products">
    <event type="alternative splicing"/>
    <isoform>
        <id>O65201-1</id>
        <name>1</name>
        <sequence type="displayed"/>
    </isoform>
    <text evidence="6">A number of isoforms are produced. According to EST sequences.</text>
</comment>
<comment type="tissue specificity">
    <text evidence="3">Expressed mainly in flowers and young seedlings. Lower expression in roots, leaves and bracts.</text>
</comment>
<comment type="developmental stage">
    <text evidence="3">Induced by seed imbibition with a peak at day 2 and then declines steadily until day 8.</text>
</comment>
<comment type="induction">
    <text evidence="4">Induced by dehydration and abscisic acid (ABA).</text>
</comment>
<comment type="similarity">
    <text evidence="6">Belongs to the acyl-CoA oxidase family.</text>
</comment>
<accession>O65201</accession>
<accession>Q9FJQ4</accession>
<gene>
    <name evidence="5" type="primary">ACX2</name>
    <name evidence="7" type="ordered locus">At5g65110</name>
    <name evidence="8" type="ORF">MQN23.4</name>
</gene>
<protein>
    <recommendedName>
        <fullName evidence="5">Acyl-coenzyme A oxidase 2, peroxisomal</fullName>
        <shortName evidence="6">AOX 2</shortName>
        <ecNumber evidence="3">1.3.3.6</ecNumber>
    </recommendedName>
    <alternativeName>
        <fullName evidence="6">Long-chain acyl-CoA oxidase</fullName>
        <shortName evidence="5">AtCX2</shortName>
    </alternativeName>
</protein>
<keyword id="KW-0025">Alternative splicing</keyword>
<keyword id="KW-0274">FAD</keyword>
<keyword id="KW-0276">Fatty acid metabolism</keyword>
<keyword id="KW-0285">Flavoprotein</keyword>
<keyword id="KW-0443">Lipid metabolism</keyword>
<keyword id="KW-0560">Oxidoreductase</keyword>
<keyword id="KW-0576">Peroxisome</keyword>
<keyword id="KW-1185">Reference proteome</keyword>
<keyword id="KW-0809">Transit peptide</keyword>
<dbReference type="EC" id="1.3.3.6" evidence="3"/>
<dbReference type="EMBL" id="AF057043">
    <property type="protein sequence ID" value="AAC13497.1"/>
    <property type="molecule type" value="mRNA"/>
</dbReference>
<dbReference type="EMBL" id="AB013395">
    <property type="protein sequence ID" value="BAB11647.1"/>
    <property type="molecule type" value="Genomic_DNA"/>
</dbReference>
<dbReference type="EMBL" id="CP002688">
    <property type="protein sequence ID" value="AED98003.1"/>
    <property type="molecule type" value="Genomic_DNA"/>
</dbReference>
<dbReference type="PIR" id="T52120">
    <property type="entry name" value="T52120"/>
</dbReference>
<dbReference type="RefSeq" id="NP_201316.1">
    <molecule id="O65201-1"/>
    <property type="nucleotide sequence ID" value="NM_125910.6"/>
</dbReference>
<dbReference type="SMR" id="O65201"/>
<dbReference type="FunCoup" id="O65201">
    <property type="interactions" value="1094"/>
</dbReference>
<dbReference type="IntAct" id="O65201">
    <property type="interactions" value="3"/>
</dbReference>
<dbReference type="STRING" id="3702.O65201"/>
<dbReference type="PaxDb" id="3702-AT5G65110.1"/>
<dbReference type="ProteomicsDB" id="244361">
    <molecule id="O65201-1"/>
</dbReference>
<dbReference type="EnsemblPlants" id="AT5G65110.1">
    <molecule id="O65201-1"/>
    <property type="protein sequence ID" value="AT5G65110.1"/>
    <property type="gene ID" value="AT5G65110"/>
</dbReference>
<dbReference type="GeneID" id="836635"/>
<dbReference type="Gramene" id="AT5G65110.1">
    <molecule id="O65201-1"/>
    <property type="protein sequence ID" value="AT5G65110.1"/>
    <property type="gene ID" value="AT5G65110"/>
</dbReference>
<dbReference type="KEGG" id="ath:AT5G65110"/>
<dbReference type="Araport" id="AT5G65110"/>
<dbReference type="TAIR" id="AT5G65110">
    <property type="gene designation" value="ACX2"/>
</dbReference>
<dbReference type="eggNOG" id="KOG0135">
    <property type="taxonomic scope" value="Eukaryota"/>
</dbReference>
<dbReference type="HOGENOM" id="CLU_014629_4_3_1"/>
<dbReference type="InParanoid" id="O65201"/>
<dbReference type="OMA" id="SINKRFA"/>
<dbReference type="OrthoDB" id="538336at2759"/>
<dbReference type="PhylomeDB" id="O65201"/>
<dbReference type="BioCyc" id="ARA:AT5G65110-MONOMER"/>
<dbReference type="BioCyc" id="MetaCyc:AT5G65110-MONOMER"/>
<dbReference type="BRENDA" id="1.3.3.6">
    <property type="organism ID" value="399"/>
</dbReference>
<dbReference type="PRO" id="PR:O65201"/>
<dbReference type="Proteomes" id="UP000006548">
    <property type="component" value="Chromosome 5"/>
</dbReference>
<dbReference type="ExpressionAtlas" id="O65201">
    <property type="expression patterns" value="baseline and differential"/>
</dbReference>
<dbReference type="GO" id="GO:0005777">
    <property type="term" value="C:peroxisome"/>
    <property type="evidence" value="ECO:0000250"/>
    <property type="project" value="TAIR"/>
</dbReference>
<dbReference type="GO" id="GO:0003997">
    <property type="term" value="F:acyl-CoA oxidase activity"/>
    <property type="evidence" value="ECO:0000314"/>
    <property type="project" value="TAIR"/>
</dbReference>
<dbReference type="GO" id="GO:0071949">
    <property type="term" value="F:FAD binding"/>
    <property type="evidence" value="ECO:0007669"/>
    <property type="project" value="InterPro"/>
</dbReference>
<dbReference type="GO" id="GO:0005504">
    <property type="term" value="F:fatty acid binding"/>
    <property type="evidence" value="ECO:0007669"/>
    <property type="project" value="InterPro"/>
</dbReference>
<dbReference type="GO" id="GO:0006635">
    <property type="term" value="P:fatty acid beta-oxidation"/>
    <property type="evidence" value="ECO:0000314"/>
    <property type="project" value="TAIR"/>
</dbReference>
<dbReference type="GO" id="GO:0033540">
    <property type="term" value="P:fatty acid beta-oxidation using acyl-CoA oxidase"/>
    <property type="evidence" value="ECO:0007669"/>
    <property type="project" value="InterPro"/>
</dbReference>
<dbReference type="GO" id="GO:0001676">
    <property type="term" value="P:long-chain fatty acid metabolic process"/>
    <property type="evidence" value="ECO:0000314"/>
    <property type="project" value="TAIR"/>
</dbReference>
<dbReference type="CDD" id="cd01150">
    <property type="entry name" value="AXO"/>
    <property type="match status" value="1"/>
</dbReference>
<dbReference type="FunFam" id="1.20.140.10:FF:000010">
    <property type="entry name" value="Acyl-coenzyme A oxidase"/>
    <property type="match status" value="1"/>
</dbReference>
<dbReference type="FunFam" id="1.20.140.10:FF:000025">
    <property type="entry name" value="Acyl-coenzyme A oxidase"/>
    <property type="match status" value="1"/>
</dbReference>
<dbReference type="FunFam" id="2.40.110.10:FF:000005">
    <property type="entry name" value="Acyl-coenzyme A oxidase"/>
    <property type="match status" value="1"/>
</dbReference>
<dbReference type="Gene3D" id="2.40.110.10">
    <property type="entry name" value="Butyryl-CoA Dehydrogenase, subunit A, domain 2"/>
    <property type="match status" value="1"/>
</dbReference>
<dbReference type="Gene3D" id="1.20.140.10">
    <property type="entry name" value="Butyryl-CoA Dehydrogenase, subunit A, domain 3"/>
    <property type="match status" value="2"/>
</dbReference>
<dbReference type="InterPro" id="IPR034171">
    <property type="entry name" value="ACO"/>
</dbReference>
<dbReference type="InterPro" id="IPR055060">
    <property type="entry name" value="ACOX_C_alpha1"/>
</dbReference>
<dbReference type="InterPro" id="IPR006091">
    <property type="entry name" value="Acyl-CoA_Oxase/DH_mid-dom"/>
</dbReference>
<dbReference type="InterPro" id="IPR046373">
    <property type="entry name" value="Acyl-CoA_Oxase/DH_mid-dom_sf"/>
</dbReference>
<dbReference type="InterPro" id="IPR012258">
    <property type="entry name" value="Acyl-CoA_oxidase"/>
</dbReference>
<dbReference type="InterPro" id="IPR002655">
    <property type="entry name" value="Acyl-CoA_oxidase_C"/>
</dbReference>
<dbReference type="InterPro" id="IPR036250">
    <property type="entry name" value="AcylCo_DH-like_C"/>
</dbReference>
<dbReference type="InterPro" id="IPR009100">
    <property type="entry name" value="AcylCoA_DH/oxidase_NM_dom_sf"/>
</dbReference>
<dbReference type="PANTHER" id="PTHR10909:SF378">
    <property type="entry name" value="ACYL-COENZYME A OXIDASE"/>
    <property type="match status" value="1"/>
</dbReference>
<dbReference type="PANTHER" id="PTHR10909">
    <property type="entry name" value="ELECTRON TRANSPORT OXIDOREDUCTASE"/>
    <property type="match status" value="1"/>
</dbReference>
<dbReference type="Pfam" id="PF01756">
    <property type="entry name" value="ACOX"/>
    <property type="match status" value="1"/>
</dbReference>
<dbReference type="Pfam" id="PF22924">
    <property type="entry name" value="ACOX_C_alpha1"/>
    <property type="match status" value="1"/>
</dbReference>
<dbReference type="Pfam" id="PF02770">
    <property type="entry name" value="Acyl-CoA_dh_M"/>
    <property type="match status" value="1"/>
</dbReference>
<dbReference type="PIRSF" id="PIRSF000168">
    <property type="entry name" value="Acyl-CoA_oxidase"/>
    <property type="match status" value="1"/>
</dbReference>
<dbReference type="SUPFAM" id="SSF47203">
    <property type="entry name" value="Acyl-CoA dehydrogenase C-terminal domain-like"/>
    <property type="match status" value="2"/>
</dbReference>
<dbReference type="SUPFAM" id="SSF56645">
    <property type="entry name" value="Acyl-CoA dehydrogenase NM domain-like"/>
    <property type="match status" value="1"/>
</dbReference>
<evidence type="ECO:0000250" key="1">
    <source>
        <dbReference type="UniProtKB" id="O65202"/>
    </source>
</evidence>
<evidence type="ECO:0000255" key="2"/>
<evidence type="ECO:0000269" key="3">
    <source>
    </source>
</evidence>
<evidence type="ECO:0000269" key="4">
    <source>
    </source>
</evidence>
<evidence type="ECO:0000303" key="5">
    <source>
    </source>
</evidence>
<evidence type="ECO:0000305" key="6"/>
<evidence type="ECO:0000312" key="7">
    <source>
        <dbReference type="Araport" id="AT5G65110"/>
    </source>
</evidence>
<evidence type="ECO:0000312" key="8">
    <source>
        <dbReference type="EMBL" id="BAB11647.1"/>
    </source>
</evidence>
<reference key="1">
    <citation type="journal article" date="1999" name="Plant J.">
        <title>Long-chain acyl-CoA oxidases of Arabidopsis.</title>
        <authorList>
            <person name="Hooks M.A."/>
            <person name="Kellas F."/>
            <person name="Graham I.A."/>
        </authorList>
    </citation>
    <scope>NUCLEOTIDE SEQUENCE [MRNA]</scope>
    <scope>FUNCTION</scope>
    <scope>CATALYTIC ACTIVITY</scope>
    <scope>BIOPHYSICOCHEMICAL PROPERTIES</scope>
    <scope>DEVELOPMENTAL STAGE</scope>
    <scope>TISSUE SPECIFICITY</scope>
    <source>
        <strain>cv. Columbia</strain>
        <tissue>Seedling hypocotyl</tissue>
    </source>
</reference>
<reference key="2">
    <citation type="journal article" date="1998" name="DNA Res.">
        <title>Structural analysis of Arabidopsis thaliana chromosome 5. VI. Sequence features of the regions of 1,367,185 bp covered by 19 physically assigned P1 and TAC clones.</title>
        <authorList>
            <person name="Kotani H."/>
            <person name="Nakamura Y."/>
            <person name="Sato S."/>
            <person name="Asamizu E."/>
            <person name="Kaneko T."/>
            <person name="Miyajima N."/>
            <person name="Tabata S."/>
        </authorList>
    </citation>
    <scope>NUCLEOTIDE SEQUENCE [LARGE SCALE GENOMIC DNA]</scope>
    <source>
        <strain>cv. Columbia</strain>
    </source>
</reference>
<reference key="3">
    <citation type="journal article" date="2017" name="Plant J.">
        <title>Araport11: a complete reannotation of the Arabidopsis thaliana reference genome.</title>
        <authorList>
            <person name="Cheng C.Y."/>
            <person name="Krishnakumar V."/>
            <person name="Chan A.P."/>
            <person name="Thibaud-Nissen F."/>
            <person name="Schobel S."/>
            <person name="Town C.D."/>
        </authorList>
    </citation>
    <scope>GENOME REANNOTATION</scope>
    <source>
        <strain>cv. Columbia</strain>
    </source>
</reference>
<reference key="4">
    <citation type="journal article" date="2004" name="Plant Physiol.">
        <title>Gene-specific involvement of beta-oxidation in wound-activated responses in Arabidopsis.</title>
        <authorList>
            <person name="Cruz-Castillo M."/>
            <person name="Martinez C."/>
            <person name="Buchala A."/>
            <person name="Metraux J.-P."/>
            <person name="Leon J."/>
        </authorList>
    </citation>
    <scope>INDUCTION</scope>
</reference>
<organism>
    <name type="scientific">Arabidopsis thaliana</name>
    <name type="common">Mouse-ear cress</name>
    <dbReference type="NCBI Taxonomy" id="3702"/>
    <lineage>
        <taxon>Eukaryota</taxon>
        <taxon>Viridiplantae</taxon>
        <taxon>Streptophyta</taxon>
        <taxon>Embryophyta</taxon>
        <taxon>Tracheophyta</taxon>
        <taxon>Spermatophyta</taxon>
        <taxon>Magnoliopsida</taxon>
        <taxon>eudicotyledons</taxon>
        <taxon>Gunneridae</taxon>
        <taxon>Pentapetalae</taxon>
        <taxon>rosids</taxon>
        <taxon>malvids</taxon>
        <taxon>Brassicales</taxon>
        <taxon>Brassicaceae</taxon>
        <taxon>Camelineae</taxon>
        <taxon>Arabidopsis</taxon>
    </lineage>
</organism>
<feature type="transit peptide" description="Peroxisome" evidence="2">
    <location>
        <begin position="1"/>
        <end position="49"/>
    </location>
</feature>
<feature type="chain" id="PRO_0000000555" description="Acyl-coenzyme A oxidase 2, peroxisomal">
    <location>
        <begin position="50"/>
        <end position="692"/>
    </location>
</feature>
<feature type="active site" description="Proton acceptor" evidence="1">
    <location>
        <position position="475"/>
    </location>
</feature>
<feature type="binding site" evidence="1">
    <location>
        <position position="186"/>
    </location>
    <ligand>
        <name>FAD</name>
        <dbReference type="ChEBI" id="CHEBI:57692"/>
    </ligand>
</feature>
<feature type="binding site" evidence="1">
    <location>
        <position position="192"/>
    </location>
    <ligand>
        <name>FAD</name>
        <dbReference type="ChEBI" id="CHEBI:57692"/>
    </ligand>
</feature>
<feature type="binding site" evidence="1">
    <location>
        <position position="225"/>
    </location>
    <ligand>
        <name>FAD</name>
        <dbReference type="ChEBI" id="CHEBI:57692"/>
    </ligand>
</feature>
<feature type="binding site" evidence="1">
    <location>
        <position position="365"/>
    </location>
    <ligand>
        <name>FAD</name>
        <dbReference type="ChEBI" id="CHEBI:57692"/>
    </ligand>
</feature>
<feature type="binding site" evidence="1">
    <location>
        <position position="384"/>
    </location>
    <ligand>
        <name>FAD</name>
        <dbReference type="ChEBI" id="CHEBI:57692"/>
    </ligand>
</feature>
<feature type="binding site" evidence="1">
    <location>
        <position position="452"/>
    </location>
    <ligand>
        <name>FAD</name>
        <dbReference type="ChEBI" id="CHEBI:57692"/>
    </ligand>
</feature>
<feature type="binding site" evidence="1">
    <location>
        <position position="473"/>
    </location>
    <ligand>
        <name>FAD</name>
        <dbReference type="ChEBI" id="CHEBI:57692"/>
    </ligand>
</feature>
<feature type="binding site" evidence="1">
    <location>
        <position position="477"/>
    </location>
    <ligand>
        <name>FAD</name>
        <dbReference type="ChEBI" id="CHEBI:57692"/>
    </ligand>
</feature>
<feature type="sequence conflict" description="In Ref. 1; AAC13497." evidence="6" ref="1">
    <original>P</original>
    <variation>L</variation>
    <location>
        <position position="37"/>
    </location>
</feature>
<sequence>MESRREKNPMTEEESDGLIAARRIQRLSLHLSPSLTPSPSLPLVQTETCSARSKKLDVNGEALSLYMRGKHIDIQEKIFDFFNSRPDLQTPIEISKDDHRELCMNQLIGLVREAGVRPFRYVADDPEKYFAIMEAVGSVDMSLGIKMGVQYSLWGGSVINLGTKKHRDKYFDGIDNLDYTGCFAMTELHHGSNVQGLQTTATFDPLKDEFVIDTPNDGAIKWWIGNAAVHGKFATVFARLILPTHDSKGVSDMGVHAFIVPIRDMKTHQTLPGVEIQDCGHKVGLNGVDNGALRFRSVRIPRDNLLNRFGDVSRDGTYTSSLPTINKRFGATLGELVGGRVGLAYASVGVLKISATIAIRYSLLRQQFGPPKQPEVSILDYQSQQHKLMPMLASTYAYHFATVYLVEKYSEMKKTHDEQLVADVHALSAGLKSYVTSYTAKALSVCREACGGHGYAAVNRFGSLRNDHDIFQTFEGDNTVLLQQVAADLLKRYKEKFQGGTLTVTWSYLRESMNTYLSQPNPVTARWEGEDHLRDPKFQLDAFRYRTSRLLQNVAARLQKHSKTLGGFGAWNRCLNHLLTLAESHIETVILAKFIEAVKNCPDPSAKAALKLACDLYALDRIWKDIGTYRNVDYVAPNKAKAIHKLTEYLSFQVRNVAKELVDAFELPDHVTRAPIAMQSDAYSQYTQVVGF</sequence>